<name>LEPA_AZOSB</name>
<comment type="function">
    <text evidence="1">Required for accurate and efficient protein synthesis under certain stress conditions. May act as a fidelity factor of the translation reaction, by catalyzing a one-codon backward translocation of tRNAs on improperly translocated ribosomes. Back-translocation proceeds from a post-translocation (POST) complex to a pre-translocation (PRE) complex, thus giving elongation factor G a second chance to translocate the tRNAs correctly. Binds to ribosomes in a GTP-dependent manner.</text>
</comment>
<comment type="catalytic activity">
    <reaction evidence="1">
        <text>GTP + H2O = GDP + phosphate + H(+)</text>
        <dbReference type="Rhea" id="RHEA:19669"/>
        <dbReference type="ChEBI" id="CHEBI:15377"/>
        <dbReference type="ChEBI" id="CHEBI:15378"/>
        <dbReference type="ChEBI" id="CHEBI:37565"/>
        <dbReference type="ChEBI" id="CHEBI:43474"/>
        <dbReference type="ChEBI" id="CHEBI:58189"/>
        <dbReference type="EC" id="3.6.5.n1"/>
    </reaction>
</comment>
<comment type="subcellular location">
    <subcellularLocation>
        <location evidence="1">Cell inner membrane</location>
        <topology evidence="1">Peripheral membrane protein</topology>
        <orientation evidence="1">Cytoplasmic side</orientation>
    </subcellularLocation>
</comment>
<comment type="similarity">
    <text evidence="1">Belongs to the TRAFAC class translation factor GTPase superfamily. Classic translation factor GTPase family. LepA subfamily.</text>
</comment>
<feature type="chain" id="PRO_1000031966" description="Elongation factor 4">
    <location>
        <begin position="1"/>
        <end position="598"/>
    </location>
</feature>
<feature type="domain" description="tr-type G">
    <location>
        <begin position="2"/>
        <end position="184"/>
    </location>
</feature>
<feature type="binding site" evidence="1">
    <location>
        <begin position="14"/>
        <end position="19"/>
    </location>
    <ligand>
        <name>GTP</name>
        <dbReference type="ChEBI" id="CHEBI:37565"/>
    </ligand>
</feature>
<feature type="binding site" evidence="1">
    <location>
        <begin position="131"/>
        <end position="134"/>
    </location>
    <ligand>
        <name>GTP</name>
        <dbReference type="ChEBI" id="CHEBI:37565"/>
    </ligand>
</feature>
<proteinExistence type="inferred from homology"/>
<sequence length="598" mass="66050">MQHIRNFSIIAHIDHGKSTLADRLIQYCGGLSEREMESQVLDSMDLERERGITIKAQTAALHYRAKDGQRYNLNLIDTPGHVDFSYEVSRSLSACEGALLVVDASQGVEAQTVANCYTALDLNVEVVPVLNKIDLPAADPDNARSEIEDVIGVDASEAVLCSAKTGLGIEEVLEAIVARVPAPKGDPAAPLKALIIDSWFDNYVGVVMLVRVVDGVLKPKDRILLMSTAAQYPCDQVGVFTPKSVAREELSAGEVGFVIAGIKELEAAKVGDTITLATRPAAEPLPGFKEIKPQVFAGLYPVESSEYDQLRDSLEKLRLNDAALQFEPEVSQALGFGFRCGFLGLLHMDIVQERLEREFDMDLITTAPTVVYEVVLNNGDIIHVENPAKLPEVGKYAEIREPIITATIFLPQEYVGPVITLCNLKRGSQIDMRYHGRQVQLIYELPMNEVVMDFFDKLKSVSRGYASLDYEFKEYRSADLVKLDLMVGGEKVDALSVIVHRASAQYRGRELAAKLRGLIPRQMFDVAVQAAIGSHIIARETIKALRKNVLAKCYGGDITRKKKLLEKQKEGKKRMKQVGNVEIPQEAFLAVLRVDEGK</sequence>
<evidence type="ECO:0000255" key="1">
    <source>
        <dbReference type="HAMAP-Rule" id="MF_00071"/>
    </source>
</evidence>
<accession>A1K601</accession>
<dbReference type="EC" id="3.6.5.n1" evidence="1"/>
<dbReference type="EMBL" id="AM406670">
    <property type="protein sequence ID" value="CAL94256.1"/>
    <property type="molecule type" value="Genomic_DNA"/>
</dbReference>
<dbReference type="RefSeq" id="WP_011765372.1">
    <property type="nucleotide sequence ID" value="NC_008702.1"/>
</dbReference>
<dbReference type="SMR" id="A1K601"/>
<dbReference type="STRING" id="62928.azo1639"/>
<dbReference type="KEGG" id="aoa:dqs_1764"/>
<dbReference type="KEGG" id="azo:azo1639"/>
<dbReference type="eggNOG" id="COG0481">
    <property type="taxonomic scope" value="Bacteria"/>
</dbReference>
<dbReference type="HOGENOM" id="CLU_009995_3_3_4"/>
<dbReference type="OrthoDB" id="9801472at2"/>
<dbReference type="Proteomes" id="UP000002588">
    <property type="component" value="Chromosome"/>
</dbReference>
<dbReference type="GO" id="GO:0005886">
    <property type="term" value="C:plasma membrane"/>
    <property type="evidence" value="ECO:0007669"/>
    <property type="project" value="UniProtKB-SubCell"/>
</dbReference>
<dbReference type="GO" id="GO:0005525">
    <property type="term" value="F:GTP binding"/>
    <property type="evidence" value="ECO:0007669"/>
    <property type="project" value="UniProtKB-UniRule"/>
</dbReference>
<dbReference type="GO" id="GO:0003924">
    <property type="term" value="F:GTPase activity"/>
    <property type="evidence" value="ECO:0007669"/>
    <property type="project" value="UniProtKB-UniRule"/>
</dbReference>
<dbReference type="GO" id="GO:0097216">
    <property type="term" value="F:guanosine tetraphosphate binding"/>
    <property type="evidence" value="ECO:0007669"/>
    <property type="project" value="UniProtKB-ARBA"/>
</dbReference>
<dbReference type="GO" id="GO:0043022">
    <property type="term" value="F:ribosome binding"/>
    <property type="evidence" value="ECO:0007669"/>
    <property type="project" value="UniProtKB-UniRule"/>
</dbReference>
<dbReference type="GO" id="GO:0003746">
    <property type="term" value="F:translation elongation factor activity"/>
    <property type="evidence" value="ECO:0007669"/>
    <property type="project" value="UniProtKB-UniRule"/>
</dbReference>
<dbReference type="GO" id="GO:0045727">
    <property type="term" value="P:positive regulation of translation"/>
    <property type="evidence" value="ECO:0007669"/>
    <property type="project" value="UniProtKB-UniRule"/>
</dbReference>
<dbReference type="CDD" id="cd03699">
    <property type="entry name" value="EF4_II"/>
    <property type="match status" value="1"/>
</dbReference>
<dbReference type="CDD" id="cd16260">
    <property type="entry name" value="EF4_III"/>
    <property type="match status" value="1"/>
</dbReference>
<dbReference type="CDD" id="cd01890">
    <property type="entry name" value="LepA"/>
    <property type="match status" value="1"/>
</dbReference>
<dbReference type="CDD" id="cd03709">
    <property type="entry name" value="lepA_C"/>
    <property type="match status" value="1"/>
</dbReference>
<dbReference type="FunFam" id="3.40.50.300:FF:000078">
    <property type="entry name" value="Elongation factor 4"/>
    <property type="match status" value="1"/>
</dbReference>
<dbReference type="FunFam" id="2.40.30.10:FF:000015">
    <property type="entry name" value="Translation factor GUF1, mitochondrial"/>
    <property type="match status" value="1"/>
</dbReference>
<dbReference type="FunFam" id="3.30.70.240:FF:000007">
    <property type="entry name" value="Translation factor GUF1, mitochondrial"/>
    <property type="match status" value="1"/>
</dbReference>
<dbReference type="FunFam" id="3.30.70.2570:FF:000001">
    <property type="entry name" value="Translation factor GUF1, mitochondrial"/>
    <property type="match status" value="1"/>
</dbReference>
<dbReference type="FunFam" id="3.30.70.870:FF:000004">
    <property type="entry name" value="Translation factor GUF1, mitochondrial"/>
    <property type="match status" value="1"/>
</dbReference>
<dbReference type="Gene3D" id="3.30.70.240">
    <property type="match status" value="1"/>
</dbReference>
<dbReference type="Gene3D" id="3.30.70.2570">
    <property type="entry name" value="Elongation factor 4, C-terminal domain"/>
    <property type="match status" value="1"/>
</dbReference>
<dbReference type="Gene3D" id="3.30.70.870">
    <property type="entry name" value="Elongation Factor G (Translational Gtpase), domain 3"/>
    <property type="match status" value="1"/>
</dbReference>
<dbReference type="Gene3D" id="3.40.50.300">
    <property type="entry name" value="P-loop containing nucleotide triphosphate hydrolases"/>
    <property type="match status" value="1"/>
</dbReference>
<dbReference type="Gene3D" id="2.40.30.10">
    <property type="entry name" value="Translation factors"/>
    <property type="match status" value="1"/>
</dbReference>
<dbReference type="HAMAP" id="MF_00071">
    <property type="entry name" value="LepA"/>
    <property type="match status" value="1"/>
</dbReference>
<dbReference type="InterPro" id="IPR006297">
    <property type="entry name" value="EF-4"/>
</dbReference>
<dbReference type="InterPro" id="IPR035647">
    <property type="entry name" value="EFG_III/V"/>
</dbReference>
<dbReference type="InterPro" id="IPR000640">
    <property type="entry name" value="EFG_V-like"/>
</dbReference>
<dbReference type="InterPro" id="IPR004161">
    <property type="entry name" value="EFTu-like_2"/>
</dbReference>
<dbReference type="InterPro" id="IPR031157">
    <property type="entry name" value="G_TR_CS"/>
</dbReference>
<dbReference type="InterPro" id="IPR038363">
    <property type="entry name" value="LepA_C_sf"/>
</dbReference>
<dbReference type="InterPro" id="IPR013842">
    <property type="entry name" value="LepA_CTD"/>
</dbReference>
<dbReference type="InterPro" id="IPR035654">
    <property type="entry name" value="LepA_IV"/>
</dbReference>
<dbReference type="InterPro" id="IPR027417">
    <property type="entry name" value="P-loop_NTPase"/>
</dbReference>
<dbReference type="InterPro" id="IPR005225">
    <property type="entry name" value="Small_GTP-bd"/>
</dbReference>
<dbReference type="InterPro" id="IPR000795">
    <property type="entry name" value="T_Tr_GTP-bd_dom"/>
</dbReference>
<dbReference type="InterPro" id="IPR009000">
    <property type="entry name" value="Transl_B-barrel_sf"/>
</dbReference>
<dbReference type="NCBIfam" id="TIGR01393">
    <property type="entry name" value="lepA"/>
    <property type="match status" value="1"/>
</dbReference>
<dbReference type="NCBIfam" id="TIGR00231">
    <property type="entry name" value="small_GTP"/>
    <property type="match status" value="1"/>
</dbReference>
<dbReference type="PANTHER" id="PTHR43512:SF4">
    <property type="entry name" value="TRANSLATION FACTOR GUF1 HOMOLOG, CHLOROPLASTIC"/>
    <property type="match status" value="1"/>
</dbReference>
<dbReference type="PANTHER" id="PTHR43512">
    <property type="entry name" value="TRANSLATION FACTOR GUF1-RELATED"/>
    <property type="match status" value="1"/>
</dbReference>
<dbReference type="Pfam" id="PF00679">
    <property type="entry name" value="EFG_C"/>
    <property type="match status" value="1"/>
</dbReference>
<dbReference type="Pfam" id="PF00009">
    <property type="entry name" value="GTP_EFTU"/>
    <property type="match status" value="1"/>
</dbReference>
<dbReference type="Pfam" id="PF03144">
    <property type="entry name" value="GTP_EFTU_D2"/>
    <property type="match status" value="1"/>
</dbReference>
<dbReference type="Pfam" id="PF06421">
    <property type="entry name" value="LepA_C"/>
    <property type="match status" value="1"/>
</dbReference>
<dbReference type="PRINTS" id="PR00315">
    <property type="entry name" value="ELONGATNFCT"/>
</dbReference>
<dbReference type="SUPFAM" id="SSF54980">
    <property type="entry name" value="EF-G C-terminal domain-like"/>
    <property type="match status" value="2"/>
</dbReference>
<dbReference type="SUPFAM" id="SSF52540">
    <property type="entry name" value="P-loop containing nucleoside triphosphate hydrolases"/>
    <property type="match status" value="1"/>
</dbReference>
<dbReference type="SUPFAM" id="SSF50447">
    <property type="entry name" value="Translation proteins"/>
    <property type="match status" value="1"/>
</dbReference>
<dbReference type="PROSITE" id="PS00301">
    <property type="entry name" value="G_TR_1"/>
    <property type="match status" value="1"/>
</dbReference>
<dbReference type="PROSITE" id="PS51722">
    <property type="entry name" value="G_TR_2"/>
    <property type="match status" value="1"/>
</dbReference>
<keyword id="KW-0997">Cell inner membrane</keyword>
<keyword id="KW-1003">Cell membrane</keyword>
<keyword id="KW-0342">GTP-binding</keyword>
<keyword id="KW-0378">Hydrolase</keyword>
<keyword id="KW-0472">Membrane</keyword>
<keyword id="KW-0547">Nucleotide-binding</keyword>
<keyword id="KW-0648">Protein biosynthesis</keyword>
<keyword id="KW-1185">Reference proteome</keyword>
<gene>
    <name evidence="1" type="primary">lepA</name>
    <name type="ordered locus">azo1639</name>
</gene>
<organism>
    <name type="scientific">Azoarcus sp. (strain BH72)</name>
    <dbReference type="NCBI Taxonomy" id="418699"/>
    <lineage>
        <taxon>Bacteria</taxon>
        <taxon>Pseudomonadati</taxon>
        <taxon>Pseudomonadota</taxon>
        <taxon>Betaproteobacteria</taxon>
        <taxon>Rhodocyclales</taxon>
        <taxon>Zoogloeaceae</taxon>
        <taxon>Azoarcus</taxon>
    </lineage>
</organism>
<protein>
    <recommendedName>
        <fullName evidence="1">Elongation factor 4</fullName>
        <shortName evidence="1">EF-4</shortName>
        <ecNumber evidence="1">3.6.5.n1</ecNumber>
    </recommendedName>
    <alternativeName>
        <fullName evidence="1">Ribosomal back-translocase LepA</fullName>
    </alternativeName>
</protein>
<reference key="1">
    <citation type="journal article" date="2006" name="Nat. Biotechnol.">
        <title>Complete genome of the mutualistic, N2-fixing grass endophyte Azoarcus sp. strain BH72.</title>
        <authorList>
            <person name="Krause A."/>
            <person name="Ramakumar A."/>
            <person name="Bartels D."/>
            <person name="Battistoni F."/>
            <person name="Bekel T."/>
            <person name="Boch J."/>
            <person name="Boehm M."/>
            <person name="Friedrich F."/>
            <person name="Hurek T."/>
            <person name="Krause L."/>
            <person name="Linke B."/>
            <person name="McHardy A.C."/>
            <person name="Sarkar A."/>
            <person name="Schneiker S."/>
            <person name="Syed A.A."/>
            <person name="Thauer R."/>
            <person name="Vorhoelter F.-J."/>
            <person name="Weidner S."/>
            <person name="Puehler A."/>
            <person name="Reinhold-Hurek B."/>
            <person name="Kaiser O."/>
            <person name="Goesmann A."/>
        </authorList>
    </citation>
    <scope>NUCLEOTIDE SEQUENCE [LARGE SCALE GENOMIC DNA]</scope>
    <source>
        <strain>BH72</strain>
    </source>
</reference>